<keyword id="KW-1204">Blood coagulation cascade activating toxin</keyword>
<keyword id="KW-0106">Calcium</keyword>
<keyword id="KW-0165">Cleavage on pair of basic residues</keyword>
<keyword id="KW-0903">Direct protein sequencing</keyword>
<keyword id="KW-1015">Disulfide bond</keyword>
<keyword id="KW-0245">EGF-like domain</keyword>
<keyword id="KW-0301">Gamma-carboxyglutamic acid</keyword>
<keyword id="KW-0325">Glycoprotein</keyword>
<keyword id="KW-1199">Hemostasis impairing toxin</keyword>
<keyword id="KW-0378">Hydrolase</keyword>
<keyword id="KW-0645">Protease</keyword>
<keyword id="KW-0655">Prothrombin activator</keyword>
<keyword id="KW-0677">Repeat</keyword>
<keyword id="KW-0964">Secreted</keyword>
<keyword id="KW-0732">Signal</keyword>
<keyword id="KW-0800">Toxin</keyword>
<reference key="1">
    <citation type="submission" date="2005-06" db="EMBL/GenBank/DDBJ databases">
        <title>Notecarin D, a prothrombin activator and factor Xa-like protease.</title>
        <authorList>
            <person name="Panizzi P.R."/>
            <person name="Panizzi J.R."/>
            <person name="Bock P.E."/>
        </authorList>
    </citation>
    <scope>NUCLEOTIDE SEQUENCE [MRNA]</scope>
    <source>
        <tissue>Venom gland</tissue>
    </source>
</reference>
<reference key="2">
    <citation type="journal article" date="2000" name="J. Biol. Chem.">
        <title>Identification and purification of vitamin K-dependent proteins and peptides with monoclonal antibodies specific for gamma-carboxyglutamyl (Gla) residues.</title>
        <authorList>
            <person name="Brown M.A."/>
            <person name="Stenberg L.M."/>
            <person name="Persson U."/>
            <person name="Stenflo J."/>
        </authorList>
    </citation>
    <scope>PROTEIN SEQUENCE OF 41-80; 210-247 AND 296-315</scope>
    <scope>FUNCTION</scope>
    <scope>SUBCELLULAR LOCATION</scope>
    <scope>TISSUE SPECIFICITY</scope>
    <scope>GAMMA-CARBOXYGLUTAMATION AT GLU-46; GLU-47; GLU-54; GLU-56; GLU-59; GLU-60; GLU-65; GLU-66; GLU-69; GLU-72 AND GLU-75</scope>
    <source>
        <tissue>Venom</tissue>
    </source>
</reference>
<reference key="3">
    <citation type="journal article" date="2003" name="Biochem. J.">
        <title>Group D prothrombin activators from snake venom are structural homologues of mammalian blood coagulation factor Xa.</title>
        <authorList>
            <person name="Rao V.S."/>
            <person name="Joseph J.S."/>
            <person name="Kini R.M."/>
        </authorList>
    </citation>
    <scope>PROTEIN SEQUENCE OF 41-76 AND 210-235</scope>
    <scope>FUNCTION</scope>
    <scope>SUBCELLULAR LOCATION</scope>
    <scope>TISSUE SPECIFICITY</scope>
    <scope>GAMMA-CARBOXYGLUTAMATION AT GLU-46; GLU-47; GLU-54; GLU-56; GLU-59; GLU-60; GLU-65; GLU-66; GLU-69; GLU-72 AND GLU-75</scope>
    <scope>IDENTIFICATION BY MASS SPECTROMETRY</scope>
    <source>
        <tissue>Venom</tissue>
    </source>
</reference>
<reference key="4">
    <citation type="journal article" date="2001" name="Thromb. Haemost.">
        <title>Classification and nomenclature of prothrombin activators isolated from snake venoms.</title>
        <authorList>
            <person name="Manjunatha Kini R."/>
            <person name="Morita T."/>
            <person name="Rosing J."/>
        </authorList>
    </citation>
    <scope>NOMENCLATURE</scope>
</reference>
<evidence type="ECO:0000250" key="1"/>
<evidence type="ECO:0000255" key="2"/>
<evidence type="ECO:0000255" key="3">
    <source>
        <dbReference type="PROSITE-ProRule" id="PRU00076"/>
    </source>
</evidence>
<evidence type="ECO:0000255" key="4">
    <source>
        <dbReference type="PROSITE-ProRule" id="PRU00274"/>
    </source>
</evidence>
<evidence type="ECO:0000255" key="5">
    <source>
        <dbReference type="PROSITE-ProRule" id="PRU00463"/>
    </source>
</evidence>
<evidence type="ECO:0000269" key="6">
    <source>
    </source>
</evidence>
<evidence type="ECO:0000269" key="7">
    <source>
    </source>
</evidence>
<organism>
    <name type="scientific">Notechis scutatus scutatus</name>
    <name type="common">Mainland tiger snake</name>
    <name type="synonym">Common tiger snake</name>
    <dbReference type="NCBI Taxonomy" id="70142"/>
    <lineage>
        <taxon>Eukaryota</taxon>
        <taxon>Metazoa</taxon>
        <taxon>Chordata</taxon>
        <taxon>Craniata</taxon>
        <taxon>Vertebrata</taxon>
        <taxon>Euteleostomi</taxon>
        <taxon>Lepidosauria</taxon>
        <taxon>Squamata</taxon>
        <taxon>Bifurcata</taxon>
        <taxon>Unidentata</taxon>
        <taxon>Episquamata</taxon>
        <taxon>Toxicofera</taxon>
        <taxon>Serpentes</taxon>
        <taxon>Colubroidea</taxon>
        <taxon>Elapidae</taxon>
        <taxon>Hydrophiinae</taxon>
        <taxon>Notechis</taxon>
    </lineage>
</organism>
<dbReference type="EC" id="3.4.21.6"/>
<dbReference type="EMBL" id="DQ104218">
    <property type="protein sequence ID" value="AAZ14091.1"/>
    <property type="molecule type" value="mRNA"/>
</dbReference>
<dbReference type="SMR" id="P82807"/>
<dbReference type="MEROPS" id="S01.426"/>
<dbReference type="GO" id="GO:0005576">
    <property type="term" value="C:extracellular region"/>
    <property type="evidence" value="ECO:0000314"/>
    <property type="project" value="UniProtKB"/>
</dbReference>
<dbReference type="GO" id="GO:0005615">
    <property type="term" value="C:extracellular space"/>
    <property type="evidence" value="ECO:0007669"/>
    <property type="project" value="TreeGrafter"/>
</dbReference>
<dbReference type="GO" id="GO:0005509">
    <property type="term" value="F:calcium ion binding"/>
    <property type="evidence" value="ECO:0007669"/>
    <property type="project" value="InterPro"/>
</dbReference>
<dbReference type="GO" id="GO:0016504">
    <property type="term" value="F:peptidase activator activity"/>
    <property type="evidence" value="ECO:0007669"/>
    <property type="project" value="UniProtKB-KW"/>
</dbReference>
<dbReference type="GO" id="GO:0004252">
    <property type="term" value="F:serine-type endopeptidase activity"/>
    <property type="evidence" value="ECO:0000314"/>
    <property type="project" value="UniProtKB"/>
</dbReference>
<dbReference type="GO" id="GO:0090729">
    <property type="term" value="F:toxin activity"/>
    <property type="evidence" value="ECO:0007669"/>
    <property type="project" value="UniProtKB-KW"/>
</dbReference>
<dbReference type="GO" id="GO:0007596">
    <property type="term" value="P:blood coagulation"/>
    <property type="evidence" value="ECO:0007669"/>
    <property type="project" value="InterPro"/>
</dbReference>
<dbReference type="GO" id="GO:0035807">
    <property type="term" value="P:induction of blood coagulation in another organism"/>
    <property type="evidence" value="ECO:0007669"/>
    <property type="project" value="UniProtKB-ARBA"/>
</dbReference>
<dbReference type="GO" id="GO:0006508">
    <property type="term" value="P:proteolysis"/>
    <property type="evidence" value="ECO:0007669"/>
    <property type="project" value="UniProtKB-KW"/>
</dbReference>
<dbReference type="GO" id="GO:0044469">
    <property type="term" value="P:venom-mediated blood coagulation"/>
    <property type="evidence" value="ECO:0000314"/>
    <property type="project" value="UniProtKB"/>
</dbReference>
<dbReference type="CDD" id="cd00054">
    <property type="entry name" value="EGF_CA"/>
    <property type="match status" value="1"/>
</dbReference>
<dbReference type="CDD" id="cd00190">
    <property type="entry name" value="Tryp_SPc"/>
    <property type="match status" value="1"/>
</dbReference>
<dbReference type="FunFam" id="2.10.25.10:FF:000513">
    <property type="entry name" value="Coagulation factor VII"/>
    <property type="match status" value="1"/>
</dbReference>
<dbReference type="FunFam" id="2.40.10.10:FF:000013">
    <property type="entry name" value="Coagulation factor X"/>
    <property type="match status" value="1"/>
</dbReference>
<dbReference type="FunFam" id="2.10.25.10:FF:000162">
    <property type="entry name" value="Coagulation factor X (Predicted)"/>
    <property type="match status" value="1"/>
</dbReference>
<dbReference type="FunFam" id="4.10.740.10:FF:000001">
    <property type="entry name" value="vitamin K-dependent protein S"/>
    <property type="match status" value="1"/>
</dbReference>
<dbReference type="Gene3D" id="4.10.740.10">
    <property type="entry name" value="Coagulation Factor IX"/>
    <property type="match status" value="1"/>
</dbReference>
<dbReference type="Gene3D" id="2.10.25.10">
    <property type="entry name" value="Laminin"/>
    <property type="match status" value="2"/>
</dbReference>
<dbReference type="Gene3D" id="2.40.10.10">
    <property type="entry name" value="Trypsin-like serine proteases"/>
    <property type="match status" value="2"/>
</dbReference>
<dbReference type="InterPro" id="IPR017857">
    <property type="entry name" value="Coagulation_fac-like_Gla_dom"/>
</dbReference>
<dbReference type="InterPro" id="IPR001881">
    <property type="entry name" value="EGF-like_Ca-bd_dom"/>
</dbReference>
<dbReference type="InterPro" id="IPR000742">
    <property type="entry name" value="EGF-like_dom"/>
</dbReference>
<dbReference type="InterPro" id="IPR000152">
    <property type="entry name" value="EGF-type_Asp/Asn_hydroxyl_site"/>
</dbReference>
<dbReference type="InterPro" id="IPR018097">
    <property type="entry name" value="EGF_Ca-bd_CS"/>
</dbReference>
<dbReference type="InterPro" id="IPR035972">
    <property type="entry name" value="GLA-like_dom_SF"/>
</dbReference>
<dbReference type="InterPro" id="IPR000294">
    <property type="entry name" value="GLA_domain"/>
</dbReference>
<dbReference type="InterPro" id="IPR012224">
    <property type="entry name" value="Pept_S1A_FX"/>
</dbReference>
<dbReference type="InterPro" id="IPR050442">
    <property type="entry name" value="Peptidase_S1_coag_factors"/>
</dbReference>
<dbReference type="InterPro" id="IPR009003">
    <property type="entry name" value="Peptidase_S1_PA"/>
</dbReference>
<dbReference type="InterPro" id="IPR043504">
    <property type="entry name" value="Peptidase_S1_PA_chymotrypsin"/>
</dbReference>
<dbReference type="InterPro" id="IPR001314">
    <property type="entry name" value="Peptidase_S1A"/>
</dbReference>
<dbReference type="InterPro" id="IPR001254">
    <property type="entry name" value="Trypsin_dom"/>
</dbReference>
<dbReference type="InterPro" id="IPR018114">
    <property type="entry name" value="TRYPSIN_HIS"/>
</dbReference>
<dbReference type="InterPro" id="IPR033116">
    <property type="entry name" value="TRYPSIN_SER"/>
</dbReference>
<dbReference type="PANTHER" id="PTHR24278">
    <property type="entry name" value="COAGULATION FACTOR"/>
    <property type="match status" value="1"/>
</dbReference>
<dbReference type="PANTHER" id="PTHR24278:SF28">
    <property type="entry name" value="COAGULATION FACTOR X"/>
    <property type="match status" value="1"/>
</dbReference>
<dbReference type="Pfam" id="PF00008">
    <property type="entry name" value="EGF"/>
    <property type="match status" value="1"/>
</dbReference>
<dbReference type="Pfam" id="PF14670">
    <property type="entry name" value="FXa_inhibition"/>
    <property type="match status" value="1"/>
</dbReference>
<dbReference type="Pfam" id="PF00594">
    <property type="entry name" value="Gla"/>
    <property type="match status" value="1"/>
</dbReference>
<dbReference type="Pfam" id="PF00089">
    <property type="entry name" value="Trypsin"/>
    <property type="match status" value="1"/>
</dbReference>
<dbReference type="PIRSF" id="PIRSF001143">
    <property type="entry name" value="Factor_X"/>
    <property type="match status" value="1"/>
</dbReference>
<dbReference type="PRINTS" id="PR00722">
    <property type="entry name" value="CHYMOTRYPSIN"/>
</dbReference>
<dbReference type="PRINTS" id="PR00001">
    <property type="entry name" value="GLABLOOD"/>
</dbReference>
<dbReference type="SMART" id="SM00181">
    <property type="entry name" value="EGF"/>
    <property type="match status" value="2"/>
</dbReference>
<dbReference type="SMART" id="SM00179">
    <property type="entry name" value="EGF_CA"/>
    <property type="match status" value="1"/>
</dbReference>
<dbReference type="SMART" id="SM00069">
    <property type="entry name" value="GLA"/>
    <property type="match status" value="1"/>
</dbReference>
<dbReference type="SMART" id="SM00020">
    <property type="entry name" value="Tryp_SPc"/>
    <property type="match status" value="1"/>
</dbReference>
<dbReference type="SUPFAM" id="SSF57196">
    <property type="entry name" value="EGF/Laminin"/>
    <property type="match status" value="1"/>
</dbReference>
<dbReference type="SUPFAM" id="SSF57630">
    <property type="entry name" value="GLA-domain"/>
    <property type="match status" value="1"/>
</dbReference>
<dbReference type="SUPFAM" id="SSF50494">
    <property type="entry name" value="Trypsin-like serine proteases"/>
    <property type="match status" value="1"/>
</dbReference>
<dbReference type="PROSITE" id="PS00010">
    <property type="entry name" value="ASX_HYDROXYL"/>
    <property type="match status" value="1"/>
</dbReference>
<dbReference type="PROSITE" id="PS00022">
    <property type="entry name" value="EGF_1"/>
    <property type="match status" value="1"/>
</dbReference>
<dbReference type="PROSITE" id="PS50026">
    <property type="entry name" value="EGF_3"/>
    <property type="match status" value="1"/>
</dbReference>
<dbReference type="PROSITE" id="PS01187">
    <property type="entry name" value="EGF_CA"/>
    <property type="match status" value="1"/>
</dbReference>
<dbReference type="PROSITE" id="PS00011">
    <property type="entry name" value="GLA_1"/>
    <property type="match status" value="1"/>
</dbReference>
<dbReference type="PROSITE" id="PS50998">
    <property type="entry name" value="GLA_2"/>
    <property type="match status" value="1"/>
</dbReference>
<dbReference type="PROSITE" id="PS50240">
    <property type="entry name" value="TRYPSIN_DOM"/>
    <property type="match status" value="1"/>
</dbReference>
<dbReference type="PROSITE" id="PS00134">
    <property type="entry name" value="TRYPSIN_HIS"/>
    <property type="match status" value="1"/>
</dbReference>
<dbReference type="PROSITE" id="PS00135">
    <property type="entry name" value="TRYPSIN_SER"/>
    <property type="match status" value="1"/>
</dbReference>
<name>FAXD1_NOTSC</name>
<comment type="function">
    <text evidence="6 7">Snake prothrombin activator that attacks the hemostatic system of prey. This protein is functionally similar to blood coagulation factor Xa.</text>
</comment>
<comment type="catalytic activity">
    <reaction>
        <text>Selective cleavage of Arg-|-Thr and then Arg-|-Ile bonds in prothrombin to form thrombin.</text>
        <dbReference type="EC" id="3.4.21.6"/>
    </reaction>
</comment>
<comment type="subunit">
    <text evidence="1">Heterodimer of a light chain and a heavy chain; disulfide-linked.</text>
</comment>
<comment type="subcellular location">
    <subcellularLocation>
        <location evidence="6 7">Secreted</location>
    </subcellularLocation>
</comment>
<comment type="tissue specificity">
    <text evidence="6 7">Expressed by the venom gland.</text>
</comment>
<comment type="PTM">
    <text evidence="5 6 7">Gamma-carboxyglutamate residues are formed by vitamin K dependent carboxylation. These residues are essential for the binding of calcium.</text>
</comment>
<comment type="miscellaneous">
    <text>Is classified in the group D of snake venom prothrombin activators, since it requires the mammalian factor Va for maximal activity for the cleavage of prothrombin. The venom of this species does not contain its own coagulation factor V-like.</text>
</comment>
<comment type="miscellaneous">
    <text>2 isoforms of notecarin D (D1 and D2) are described in PubMed:12403650. We chose to name this protein D1 according to the masses indicated in the paper.</text>
</comment>
<comment type="miscellaneous">
    <text>In contrast to blood coagulation factors that circulate as inactive zymogen in plasma, venom prothrombin activators are always found in the active form in the venom.</text>
</comment>
<comment type="similarity">
    <text evidence="4">Belongs to the peptidase S1 family. Snake venom subfamily.</text>
</comment>
<sequence length="455" mass="51464">MAPQLLLCLILTFLWSLPEAESNVFLKSKVANRFLQRTKRSNSLFEEIRPGNIERECIEEKCSKEEAREVFEDNEKTETFWNVYVDGDQCSSNPCHYRGTCKDGIGSYTCTCLPNYEGKNCEKVLYQSCRVDNGNCWHFCKRVQSETQCSCAESYRLGVDGHSCVAEGDFSCGRNIKARNKREASLPDFVQSQKATLLKKSDNPSPDIRIVNGMDCKLGECPWQAVLINEKGEVFCGGTILSPIHVLTAAHCINQTKSVSVIVGEIDISRKETRRLLSVDKIYVHTKFVPPNYYYVHQNFDRVAYDYDIAIIRMKTPIQFSENVVPACLPTADFANEVLMKQDSGIVSGFGRIRFKEPTSNTLKVITVPYVDRHTCMLSSDFRITQNMFCAGYDTLPQDACQGDSGGPHITAYRDTHFITGIISWGEGCARKGKYGVYTKVSRFIPWIKKIMSLK</sequence>
<feature type="signal peptide" evidence="2">
    <location>
        <begin position="1"/>
        <end position="20"/>
    </location>
</feature>
<feature type="propeptide" id="PRO_0000409723" evidence="1">
    <location>
        <begin position="21"/>
        <end position="40"/>
    </location>
</feature>
<feature type="chain" id="PRO_0000027819" description="Notecarin-D1 light chain">
    <location>
        <begin position="41"/>
        <end position="181"/>
    </location>
</feature>
<feature type="propeptide" id="PRO_0000409724" description="Activation peptide" evidence="1">
    <location>
        <begin position="182"/>
        <end position="209"/>
    </location>
</feature>
<feature type="chain" id="PRO_0000027821" description="Notecarin-D1 heavy chain">
    <location>
        <begin position="210"/>
        <end position="455"/>
    </location>
</feature>
<feature type="domain" description="Gla" evidence="5">
    <location>
        <begin position="41"/>
        <end position="86"/>
    </location>
</feature>
<feature type="domain" description="EGF-like 1; calcium-binding" evidence="3">
    <location>
        <begin position="86"/>
        <end position="122"/>
    </location>
</feature>
<feature type="domain" description="EGF-like 2" evidence="3">
    <location>
        <begin position="129"/>
        <end position="164"/>
    </location>
</feature>
<feature type="domain" description="Peptidase S1" evidence="4">
    <location>
        <begin position="210"/>
        <end position="453"/>
    </location>
</feature>
<feature type="active site" description="Charge relay system" evidence="1">
    <location>
        <position position="251"/>
    </location>
</feature>
<feature type="active site" description="Charge relay system" evidence="1">
    <location>
        <position position="308"/>
    </location>
</feature>
<feature type="active site" description="Charge relay system" evidence="1">
    <location>
        <position position="405"/>
    </location>
</feature>
<feature type="modified residue" description="4-carboxyglutamate" evidence="5 6 7">
    <location>
        <position position="46"/>
    </location>
</feature>
<feature type="modified residue" description="4-carboxyglutamate" evidence="5 6 7">
    <location>
        <position position="47"/>
    </location>
</feature>
<feature type="modified residue" description="4-carboxyglutamate" evidence="5 6 7">
    <location>
        <position position="54"/>
    </location>
</feature>
<feature type="modified residue" description="4-carboxyglutamate" evidence="5 6 7">
    <location>
        <position position="56"/>
    </location>
</feature>
<feature type="modified residue" description="4-carboxyglutamate" evidence="5 6 7">
    <location>
        <position position="59"/>
    </location>
</feature>
<feature type="modified residue" description="4-carboxyglutamate" evidence="5 6 7">
    <location>
        <position position="60"/>
    </location>
</feature>
<feature type="modified residue" description="4-carboxyglutamate" evidence="5 6 7">
    <location>
        <position position="65"/>
    </location>
</feature>
<feature type="modified residue" description="4-carboxyglutamate" evidence="5 6 7">
    <location>
        <position position="66"/>
    </location>
</feature>
<feature type="modified residue" description="4-carboxyglutamate" evidence="5 6 7">
    <location>
        <position position="69"/>
    </location>
</feature>
<feature type="modified residue" description="4-carboxyglutamate" evidence="5 6 7">
    <location>
        <position position="72"/>
    </location>
</feature>
<feature type="modified residue" description="4-carboxyglutamate" evidence="5 6 7">
    <location>
        <position position="75"/>
    </location>
</feature>
<feature type="glycosylation site" description="O-linked (Hex...) serine" evidence="1">
    <location>
        <position position="92"/>
    </location>
</feature>
<feature type="glycosylation site" description="N-linked (GlcNAc...) asparagine" evidence="2">
    <location>
        <position position="254"/>
    </location>
</feature>
<feature type="disulfide bond" evidence="1">
    <location>
        <begin position="57"/>
        <end position="62"/>
    </location>
</feature>
<feature type="disulfide bond" evidence="1">
    <location>
        <begin position="90"/>
        <end position="101"/>
    </location>
</feature>
<feature type="disulfide bond" evidence="1">
    <location>
        <begin position="95"/>
        <end position="110"/>
    </location>
</feature>
<feature type="disulfide bond" evidence="1">
    <location>
        <begin position="112"/>
        <end position="121"/>
    </location>
</feature>
<feature type="disulfide bond" evidence="1">
    <location>
        <begin position="129"/>
        <end position="140"/>
    </location>
</feature>
<feature type="disulfide bond" evidence="1">
    <location>
        <begin position="136"/>
        <end position="149"/>
    </location>
</feature>
<feature type="disulfide bond" evidence="1">
    <location>
        <begin position="151"/>
        <end position="164"/>
    </location>
</feature>
<feature type="disulfide bond" description="Interchain (between light and heavy chains)" evidence="3 4 5">
    <location>
        <begin position="172"/>
        <end position="328"/>
    </location>
</feature>
<feature type="disulfide bond" evidence="1">
    <location>
        <begin position="216"/>
        <end position="221"/>
    </location>
</feature>
<feature type="disulfide bond" evidence="1">
    <location>
        <begin position="236"/>
        <end position="252"/>
    </location>
</feature>
<feature type="disulfide bond" evidence="1">
    <location>
        <begin position="376"/>
        <end position="390"/>
    </location>
</feature>
<feature type="disulfide bond" evidence="1">
    <location>
        <begin position="401"/>
        <end position="429"/>
    </location>
</feature>
<accession>P82807</accession>
<accession>Q4F879</accession>
<protein>
    <recommendedName>
        <fullName>Venom prothrombin activator notecarin-D1</fullName>
        <shortName>vPA</shortName>
        <ecNumber>3.4.21.6</ecNumber>
    </recommendedName>
    <alternativeName>
        <fullName>Venom coagulation factor Xa-like protease</fullName>
    </alternativeName>
    <component>
        <recommendedName>
            <fullName>Notecarin-D1 light chain</fullName>
        </recommendedName>
    </component>
    <component>
        <recommendedName>
            <fullName>Notecarin-D1 heavy chain</fullName>
        </recommendedName>
    </component>
</protein>
<proteinExistence type="evidence at protein level"/>